<reference key="1">
    <citation type="submission" date="2009-07" db="EMBL/GenBank/DDBJ databases">
        <title>Complete sequence of Pectobacterium carotovorum subsp. carotovorum PC1.</title>
        <authorList>
            <consortium name="US DOE Joint Genome Institute"/>
            <person name="Lucas S."/>
            <person name="Copeland A."/>
            <person name="Lapidus A."/>
            <person name="Glavina del Rio T."/>
            <person name="Tice H."/>
            <person name="Bruce D."/>
            <person name="Goodwin L."/>
            <person name="Pitluck S."/>
            <person name="Munk A.C."/>
            <person name="Brettin T."/>
            <person name="Detter J.C."/>
            <person name="Han C."/>
            <person name="Tapia R."/>
            <person name="Larimer F."/>
            <person name="Land M."/>
            <person name="Hauser L."/>
            <person name="Kyrpides N."/>
            <person name="Mikhailova N."/>
            <person name="Balakrishnan V."/>
            <person name="Glasner J."/>
            <person name="Perna N.T."/>
        </authorList>
    </citation>
    <scope>NUCLEOTIDE SEQUENCE [LARGE SCALE GENOMIC DNA]</scope>
    <source>
        <strain>PC1</strain>
    </source>
</reference>
<evidence type="ECO:0000255" key="1">
    <source>
        <dbReference type="HAMAP-Rule" id="MF_01166"/>
    </source>
</evidence>
<sequence>MKAIVFAYHDIGCVGLEALKLAGYEIQAVFTHSDAPGENHFYASVAKAAAEMDVPVFAPEDVNHPLWVNRIRELAPDVIFSFYYRTLLSDDILQLPSFGAFNLHGSLLPRYRGRAPVNWVLVNGETQTGVTLHKMVSRADAGDIVAQSVVEIDDEDTALTLHGKCRTTAAALLAQQLPLIRSREIMLTPQDESQASYFGRRTAADGLIDWQKSAREINNLIRAVTEPYPGAFTFLGERKVVIWRARVLKNDSVKANGVKQEPGSIISTSPLVVSCGEDALEIVSGQSESGLYMSGSRLAAEMGMVPQAKLGNLASRVQRRRTRVLILGVNGFIGNHLTERLLRDDRYEIYGLDISSDAIARFLGDPRFHFVEGDISIHNEWIEYHIKKCDVILPLVAIATPIEYTRNPLRVFELDFEENLKIVRDCVRYNKRIVFPSTSEVYGMCDDKEFDEDTSRLIVGPINKQRWIYSVSKQLLDRVIWAYGAKNGLRFTLFRPFNWMGPRLDTLDAARIGSSRAITQLILNLVEGSPIKLVDGGAQKRCFTDIHDGIEALFRIIENRNGQCDGQIINIGNPHNEASIRELGDMLLTSFNAHPLRDRFPPFAGFIEVESSSYYGKGYQDVAHRTPSIRNAKRLLEWEPTVKMEQTVAETLDYFLRTVDPQHADNVTDTQG</sequence>
<organism>
    <name type="scientific">Pectobacterium carotovorum subsp. carotovorum (strain PC1)</name>
    <dbReference type="NCBI Taxonomy" id="561230"/>
    <lineage>
        <taxon>Bacteria</taxon>
        <taxon>Pseudomonadati</taxon>
        <taxon>Pseudomonadota</taxon>
        <taxon>Gammaproteobacteria</taxon>
        <taxon>Enterobacterales</taxon>
        <taxon>Pectobacteriaceae</taxon>
        <taxon>Pectobacterium</taxon>
    </lineage>
</organism>
<feature type="chain" id="PRO_1000213730" description="Bifunctional polymyxin resistance protein ArnA">
    <location>
        <begin position="1"/>
        <end position="672"/>
    </location>
</feature>
<feature type="region of interest" description="Formyltransferase ArnAFT">
    <location>
        <begin position="1"/>
        <end position="310"/>
    </location>
</feature>
<feature type="region of interest" description="Dehydrogenase ArnADH">
    <location>
        <begin position="320"/>
        <end position="672"/>
    </location>
</feature>
<feature type="active site" description="Proton donor; for formyltransferase activity" evidence="1">
    <location>
        <position position="104"/>
    </location>
</feature>
<feature type="active site" description="Proton acceptor; for decarboxylase activity" evidence="1">
    <location>
        <position position="440"/>
    </location>
</feature>
<feature type="active site" description="Proton donor; for decarboxylase activity" evidence="1">
    <location>
        <position position="625"/>
    </location>
</feature>
<feature type="binding site" evidence="1">
    <location>
        <position position="114"/>
    </location>
    <ligand>
        <name>(6R)-10-formyltetrahydrofolate</name>
        <dbReference type="ChEBI" id="CHEBI:195366"/>
    </ligand>
</feature>
<feature type="binding site" evidence="1">
    <location>
        <begin position="136"/>
        <end position="140"/>
    </location>
    <ligand>
        <name>(6R)-10-formyltetrahydrofolate</name>
        <dbReference type="ChEBI" id="CHEBI:195366"/>
    </ligand>
</feature>
<feature type="binding site" evidence="1">
    <location>
        <position position="353"/>
    </location>
    <ligand>
        <name>NAD(+)</name>
        <dbReference type="ChEBI" id="CHEBI:57540"/>
    </ligand>
</feature>
<feature type="binding site" evidence="1">
    <location>
        <begin position="374"/>
        <end position="375"/>
    </location>
    <ligand>
        <name>NAD(+)</name>
        <dbReference type="ChEBI" id="CHEBI:57540"/>
    </ligand>
</feature>
<feature type="binding site" evidence="1">
    <location>
        <position position="399"/>
    </location>
    <ligand>
        <name>UDP-alpha-D-glucuronate</name>
        <dbReference type="ChEBI" id="CHEBI:58052"/>
    </ligand>
</feature>
<feature type="binding site" evidence="1">
    <location>
        <position position="404"/>
    </location>
    <ligand>
        <name>UDP-alpha-D-glucuronate</name>
        <dbReference type="ChEBI" id="CHEBI:58052"/>
    </ligand>
</feature>
<feature type="binding site" evidence="1">
    <location>
        <begin position="438"/>
        <end position="439"/>
    </location>
    <ligand>
        <name>UDP-alpha-D-glucuronate</name>
        <dbReference type="ChEBI" id="CHEBI:58052"/>
    </ligand>
</feature>
<feature type="binding site" evidence="1">
    <location>
        <position position="466"/>
    </location>
    <ligand>
        <name>UDP-alpha-D-glucuronate</name>
        <dbReference type="ChEBI" id="CHEBI:58052"/>
    </ligand>
</feature>
<feature type="binding site" evidence="1">
    <location>
        <position position="498"/>
    </location>
    <ligand>
        <name>UDP-alpha-D-glucuronate</name>
        <dbReference type="ChEBI" id="CHEBI:58052"/>
    </ligand>
</feature>
<feature type="binding site" evidence="1">
    <location>
        <begin position="532"/>
        <end position="541"/>
    </location>
    <ligand>
        <name>UDP-alpha-D-glucuronate</name>
        <dbReference type="ChEBI" id="CHEBI:58052"/>
    </ligand>
</feature>
<feature type="binding site" evidence="1">
    <location>
        <position position="619"/>
    </location>
    <ligand>
        <name>UDP-alpha-D-glucuronate</name>
        <dbReference type="ChEBI" id="CHEBI:58052"/>
    </ligand>
</feature>
<feature type="site" description="Transition state stabilizer" evidence="1">
    <location>
        <position position="102"/>
    </location>
</feature>
<feature type="site" description="Raises pKa of active site His" evidence="1">
    <location>
        <position position="140"/>
    </location>
</feature>
<accession>C6DAW5</accession>
<keyword id="KW-0046">Antibiotic resistance</keyword>
<keyword id="KW-0441">Lipid A biosynthesis</keyword>
<keyword id="KW-0444">Lipid biosynthesis</keyword>
<keyword id="KW-0443">Lipid metabolism</keyword>
<keyword id="KW-0448">Lipopolysaccharide biosynthesis</keyword>
<keyword id="KW-0511">Multifunctional enzyme</keyword>
<keyword id="KW-0520">NAD</keyword>
<keyword id="KW-0560">Oxidoreductase</keyword>
<keyword id="KW-0808">Transferase</keyword>
<name>ARNA_PECCP</name>
<protein>
    <recommendedName>
        <fullName evidence="1">Bifunctional polymyxin resistance protein ArnA</fullName>
    </recommendedName>
    <domain>
        <recommendedName>
            <fullName evidence="1">UDP-4-amino-4-deoxy-L-arabinose formyltransferase</fullName>
            <ecNumber evidence="1">2.1.2.13</ecNumber>
        </recommendedName>
        <alternativeName>
            <fullName evidence="1">ArnAFT</fullName>
        </alternativeName>
        <alternativeName>
            <fullName evidence="1">UDP-L-Ara4N formyltransferase</fullName>
        </alternativeName>
    </domain>
    <domain>
        <recommendedName>
            <fullName evidence="1">UDP-glucuronic acid oxidase, UDP-4-keto-hexauronic acid decarboxylating</fullName>
            <ecNumber evidence="1">1.1.1.305</ecNumber>
        </recommendedName>
        <alternativeName>
            <fullName evidence="1">ArnADH</fullName>
        </alternativeName>
        <alternativeName>
            <fullName evidence="1">UDP-GlcUA decarboxylase</fullName>
        </alternativeName>
        <alternativeName>
            <fullName evidence="1">UDP-glucuronic acid dehydrogenase</fullName>
        </alternativeName>
    </domain>
</protein>
<gene>
    <name evidence="1" type="primary">arnA</name>
    <name type="ordered locus">PC1_2926</name>
</gene>
<dbReference type="EC" id="2.1.2.13" evidence="1"/>
<dbReference type="EC" id="1.1.1.305" evidence="1"/>
<dbReference type="EMBL" id="CP001657">
    <property type="protein sequence ID" value="ACT13949.1"/>
    <property type="molecule type" value="Genomic_DNA"/>
</dbReference>
<dbReference type="RefSeq" id="WP_015841105.1">
    <property type="nucleotide sequence ID" value="NC_012917.1"/>
</dbReference>
<dbReference type="SMR" id="C6DAW5"/>
<dbReference type="STRING" id="561230.PC1_2926"/>
<dbReference type="KEGG" id="pct:PC1_2926"/>
<dbReference type="eggNOG" id="COG0223">
    <property type="taxonomic scope" value="Bacteria"/>
</dbReference>
<dbReference type="eggNOG" id="COG0451">
    <property type="taxonomic scope" value="Bacteria"/>
</dbReference>
<dbReference type="HOGENOM" id="CLU_007383_23_1_6"/>
<dbReference type="OrthoDB" id="9802815at2"/>
<dbReference type="UniPathway" id="UPA00030"/>
<dbReference type="UniPathway" id="UPA00032">
    <property type="reaction ID" value="UER00492"/>
</dbReference>
<dbReference type="UniPathway" id="UPA00032">
    <property type="reaction ID" value="UER00494"/>
</dbReference>
<dbReference type="Proteomes" id="UP000002736">
    <property type="component" value="Chromosome"/>
</dbReference>
<dbReference type="GO" id="GO:0016020">
    <property type="term" value="C:membrane"/>
    <property type="evidence" value="ECO:0007669"/>
    <property type="project" value="GOC"/>
</dbReference>
<dbReference type="GO" id="GO:0016831">
    <property type="term" value="F:carboxy-lyase activity"/>
    <property type="evidence" value="ECO:0007669"/>
    <property type="project" value="InterPro"/>
</dbReference>
<dbReference type="GO" id="GO:0099619">
    <property type="term" value="F:UDP-4-amino-4-deoxy-L-arabinose formyltransferase activity"/>
    <property type="evidence" value="ECO:0007669"/>
    <property type="project" value="UniProtKB-EC"/>
</dbReference>
<dbReference type="GO" id="GO:0099618">
    <property type="term" value="F:UDP-glucuronate dehydrogenase activity"/>
    <property type="evidence" value="ECO:0007669"/>
    <property type="project" value="UniProtKB-EC"/>
</dbReference>
<dbReference type="GO" id="GO:0009245">
    <property type="term" value="P:lipid A biosynthetic process"/>
    <property type="evidence" value="ECO:0007669"/>
    <property type="project" value="UniProtKB-KW"/>
</dbReference>
<dbReference type="GO" id="GO:0009103">
    <property type="term" value="P:lipopolysaccharide biosynthetic process"/>
    <property type="evidence" value="ECO:0007669"/>
    <property type="project" value="UniProtKB-UniRule"/>
</dbReference>
<dbReference type="GO" id="GO:0046677">
    <property type="term" value="P:response to antibiotic"/>
    <property type="evidence" value="ECO:0007669"/>
    <property type="project" value="UniProtKB-KW"/>
</dbReference>
<dbReference type="CDD" id="cd08702">
    <property type="entry name" value="Arna_FMT_C"/>
    <property type="match status" value="1"/>
</dbReference>
<dbReference type="CDD" id="cd05257">
    <property type="entry name" value="Arna_like_SDR_e"/>
    <property type="match status" value="1"/>
</dbReference>
<dbReference type="FunFam" id="3.40.50.720:FF:000197">
    <property type="entry name" value="Bifunctional polymyxin resistance protein ArnA"/>
    <property type="match status" value="1"/>
</dbReference>
<dbReference type="Gene3D" id="3.40.50.12230">
    <property type="match status" value="1"/>
</dbReference>
<dbReference type="Gene3D" id="3.40.50.720">
    <property type="entry name" value="NAD(P)-binding Rossmann-like Domain"/>
    <property type="match status" value="1"/>
</dbReference>
<dbReference type="HAMAP" id="MF_01166">
    <property type="entry name" value="ArnA"/>
    <property type="match status" value="1"/>
</dbReference>
<dbReference type="InterPro" id="IPR045869">
    <property type="entry name" value="Arna-like_SDR_e"/>
</dbReference>
<dbReference type="InterPro" id="IPR021168">
    <property type="entry name" value="Bifun_polymyxin_resist_ArnA"/>
</dbReference>
<dbReference type="InterPro" id="IPR001509">
    <property type="entry name" value="Epimerase_deHydtase"/>
</dbReference>
<dbReference type="InterPro" id="IPR005793">
    <property type="entry name" value="Formyl_trans_C"/>
</dbReference>
<dbReference type="InterPro" id="IPR002376">
    <property type="entry name" value="Formyl_transf_N"/>
</dbReference>
<dbReference type="InterPro" id="IPR036477">
    <property type="entry name" value="Formyl_transf_N_sf"/>
</dbReference>
<dbReference type="InterPro" id="IPR011034">
    <property type="entry name" value="Formyl_transferase-like_C_sf"/>
</dbReference>
<dbReference type="InterPro" id="IPR050177">
    <property type="entry name" value="Lipid_A_modif_metabolic_enz"/>
</dbReference>
<dbReference type="InterPro" id="IPR036291">
    <property type="entry name" value="NAD(P)-bd_dom_sf"/>
</dbReference>
<dbReference type="NCBIfam" id="NF005414">
    <property type="entry name" value="PRK06988.1"/>
    <property type="match status" value="1"/>
</dbReference>
<dbReference type="NCBIfam" id="NF005998">
    <property type="entry name" value="PRK08125.1"/>
    <property type="match status" value="1"/>
</dbReference>
<dbReference type="NCBIfam" id="NF008872">
    <property type="entry name" value="PRK11908.1"/>
    <property type="match status" value="1"/>
</dbReference>
<dbReference type="PANTHER" id="PTHR43245">
    <property type="entry name" value="BIFUNCTIONAL POLYMYXIN RESISTANCE PROTEIN ARNA"/>
    <property type="match status" value="1"/>
</dbReference>
<dbReference type="PANTHER" id="PTHR43245:SF13">
    <property type="entry name" value="UDP-D-APIOSE_UDP-D-XYLOSE SYNTHASE 2"/>
    <property type="match status" value="1"/>
</dbReference>
<dbReference type="Pfam" id="PF01370">
    <property type="entry name" value="Epimerase"/>
    <property type="match status" value="1"/>
</dbReference>
<dbReference type="Pfam" id="PF02911">
    <property type="entry name" value="Formyl_trans_C"/>
    <property type="match status" value="1"/>
</dbReference>
<dbReference type="Pfam" id="PF00551">
    <property type="entry name" value="Formyl_trans_N"/>
    <property type="match status" value="1"/>
</dbReference>
<dbReference type="PIRSF" id="PIRSF036506">
    <property type="entry name" value="Bifun_polymyxin_resist_ArnA"/>
    <property type="match status" value="1"/>
</dbReference>
<dbReference type="SUPFAM" id="SSF50486">
    <property type="entry name" value="FMT C-terminal domain-like"/>
    <property type="match status" value="1"/>
</dbReference>
<dbReference type="SUPFAM" id="SSF53328">
    <property type="entry name" value="Formyltransferase"/>
    <property type="match status" value="1"/>
</dbReference>
<dbReference type="SUPFAM" id="SSF51735">
    <property type="entry name" value="NAD(P)-binding Rossmann-fold domains"/>
    <property type="match status" value="1"/>
</dbReference>
<comment type="function">
    <text evidence="1">Bifunctional enzyme that catalyzes the oxidative decarboxylation of UDP-glucuronic acid (UDP-GlcUA) to UDP-4-keto-arabinose (UDP-Ara4O) and the addition of a formyl group to UDP-4-amino-4-deoxy-L-arabinose (UDP-L-Ara4N) to form UDP-L-4-formamido-arabinose (UDP-L-Ara4FN). The modified arabinose is attached to lipid A and is required for resistance to polymyxin and cationic antimicrobial peptides.</text>
</comment>
<comment type="catalytic activity">
    <reaction evidence="1">
        <text>UDP-alpha-D-glucuronate + NAD(+) = UDP-beta-L-threo-pentopyranos-4-ulose + CO2 + NADH</text>
        <dbReference type="Rhea" id="RHEA:24702"/>
        <dbReference type="ChEBI" id="CHEBI:16526"/>
        <dbReference type="ChEBI" id="CHEBI:57540"/>
        <dbReference type="ChEBI" id="CHEBI:57945"/>
        <dbReference type="ChEBI" id="CHEBI:58052"/>
        <dbReference type="ChEBI" id="CHEBI:58710"/>
        <dbReference type="EC" id="1.1.1.305"/>
    </reaction>
</comment>
<comment type="catalytic activity">
    <reaction evidence="1">
        <text>UDP-4-amino-4-deoxy-beta-L-arabinose + (6R)-10-formyltetrahydrofolate = UDP-4-deoxy-4-formamido-beta-L-arabinose + (6S)-5,6,7,8-tetrahydrofolate + H(+)</text>
        <dbReference type="Rhea" id="RHEA:24706"/>
        <dbReference type="ChEBI" id="CHEBI:15378"/>
        <dbReference type="ChEBI" id="CHEBI:57453"/>
        <dbReference type="ChEBI" id="CHEBI:58708"/>
        <dbReference type="ChEBI" id="CHEBI:58709"/>
        <dbReference type="ChEBI" id="CHEBI:195366"/>
        <dbReference type="EC" id="2.1.2.13"/>
    </reaction>
</comment>
<comment type="pathway">
    <text evidence="1">Nucleotide-sugar biosynthesis; UDP-4-deoxy-4-formamido-beta-L-arabinose biosynthesis; UDP-4-deoxy-4-formamido-beta-L-arabinose from UDP-alpha-D-glucuronate: step 1/3.</text>
</comment>
<comment type="pathway">
    <text evidence="1">Nucleotide-sugar biosynthesis; UDP-4-deoxy-4-formamido-beta-L-arabinose biosynthesis; UDP-4-deoxy-4-formamido-beta-L-arabinose from UDP-alpha-D-glucuronate: step 3/3.</text>
</comment>
<comment type="pathway">
    <text evidence="1">Bacterial outer membrane biogenesis; lipopolysaccharide biosynthesis.</text>
</comment>
<comment type="subunit">
    <text evidence="1">Homohexamer, formed by a dimer of trimers.</text>
</comment>
<comment type="similarity">
    <text evidence="1">In the N-terminal section; belongs to the Fmt family. UDP-L-Ara4N formyltransferase subfamily.</text>
</comment>
<comment type="similarity">
    <text evidence="1">In the C-terminal section; belongs to the NAD(P)-dependent epimerase/dehydratase family. UDP-glucuronic acid decarboxylase subfamily.</text>
</comment>
<proteinExistence type="inferred from homology"/>